<reference key="1">
    <citation type="journal article" date="1998" name="Biol. Pharm. Bull.">
        <title>Phylogenetic analysis of Atractylodes plants based on chloroplast trnK sequence.</title>
        <authorList>
            <person name="Mizukami H."/>
            <person name="Shimizu R."/>
            <person name="Kohjyouma M."/>
            <person name="Kohda H."/>
            <person name="Kawanishi F."/>
            <person name="Hiraoka N."/>
        </authorList>
    </citation>
    <scope>NUCLEOTIDE SEQUENCE [GENOMIC DNA]</scope>
    <source>
        <tissue>Leaf</tissue>
    </source>
</reference>
<protein>
    <recommendedName>
        <fullName evidence="1">Maturase K</fullName>
    </recommendedName>
    <alternativeName>
        <fullName evidence="1">Intron maturase</fullName>
    </alternativeName>
</protein>
<sequence>MEKFQSYLGLDRSQQHYFLYPLIFQEYIYVLAHDHGLNRSILLENAGYDNKSSLLIVKRLITRMYQQNHLILSVNDSKQTPFLGDNKNFYSQVMSEVSSIIMEIPFSLRLISSLERKGVVKFDNLRSIHSIFSFLEDNFSHLNYVLDILIPYPAHLEILVQALRYWIEDASSLHLLRFFLHEYHNRDSLITSNSKKASSSFSKRNHRLFFFLYTSHVCEYESGFIFLRNQSSHLRSTSSGALLERIYFYGKIEHLAEVFTRAFQANLWLFKDPFMHYVRYQGKSILASKGTFLLMNKWKYYFVNFWKSYFYLWSQPGRIYINQLSNHSLDFLGYRSSVRLKPSMVRSQMLENAFLIDNAIKKFDTIVPIMPLIGSLAKSKFCNALGHPIGKAIWADLSDSDIIDRFGRIYRNLSHYHSGSSKKKSLYRVKYILRLSCARTLARKHKSTVRAFLKRFGSELLEEFFTEEEQVFSLTFPRVSSISRRLSRRPIWYLDIICINDLANHE</sequence>
<accession>Q7JF70</accession>
<name>MATK_ATRLA</name>
<dbReference type="EMBL" id="AB008759">
    <property type="protein sequence ID" value="BAA32656.1"/>
    <property type="molecule type" value="Genomic_DNA"/>
</dbReference>
<dbReference type="GO" id="GO:0009507">
    <property type="term" value="C:chloroplast"/>
    <property type="evidence" value="ECO:0007669"/>
    <property type="project" value="UniProtKB-SubCell"/>
</dbReference>
<dbReference type="GO" id="GO:0003723">
    <property type="term" value="F:RNA binding"/>
    <property type="evidence" value="ECO:0007669"/>
    <property type="project" value="UniProtKB-KW"/>
</dbReference>
<dbReference type="GO" id="GO:0006397">
    <property type="term" value="P:mRNA processing"/>
    <property type="evidence" value="ECO:0007669"/>
    <property type="project" value="UniProtKB-KW"/>
</dbReference>
<dbReference type="GO" id="GO:0008380">
    <property type="term" value="P:RNA splicing"/>
    <property type="evidence" value="ECO:0007669"/>
    <property type="project" value="UniProtKB-UniRule"/>
</dbReference>
<dbReference type="GO" id="GO:0008033">
    <property type="term" value="P:tRNA processing"/>
    <property type="evidence" value="ECO:0007669"/>
    <property type="project" value="UniProtKB-KW"/>
</dbReference>
<dbReference type="HAMAP" id="MF_01390">
    <property type="entry name" value="MatK"/>
    <property type="match status" value="1"/>
</dbReference>
<dbReference type="InterPro" id="IPR024937">
    <property type="entry name" value="Domain_X"/>
</dbReference>
<dbReference type="InterPro" id="IPR002866">
    <property type="entry name" value="Maturase_MatK"/>
</dbReference>
<dbReference type="InterPro" id="IPR024942">
    <property type="entry name" value="Maturase_MatK_N"/>
</dbReference>
<dbReference type="PANTHER" id="PTHR34811">
    <property type="entry name" value="MATURASE K"/>
    <property type="match status" value="1"/>
</dbReference>
<dbReference type="PANTHER" id="PTHR34811:SF1">
    <property type="entry name" value="MATURASE K"/>
    <property type="match status" value="1"/>
</dbReference>
<dbReference type="Pfam" id="PF01348">
    <property type="entry name" value="Intron_maturas2"/>
    <property type="match status" value="1"/>
</dbReference>
<dbReference type="Pfam" id="PF01824">
    <property type="entry name" value="MatK_N"/>
    <property type="match status" value="1"/>
</dbReference>
<gene>
    <name evidence="1" type="primary">matK</name>
</gene>
<keyword id="KW-0150">Chloroplast</keyword>
<keyword id="KW-0507">mRNA processing</keyword>
<keyword id="KW-0934">Plastid</keyword>
<keyword id="KW-0694">RNA-binding</keyword>
<keyword id="KW-0819">tRNA processing</keyword>
<evidence type="ECO:0000255" key="1">
    <source>
        <dbReference type="HAMAP-Rule" id="MF_01390"/>
    </source>
</evidence>
<geneLocation type="chloroplast"/>
<comment type="function">
    <text evidence="1">Usually encoded in the trnK tRNA gene intron. Probably assists in splicing its own and other chloroplast group II introns.</text>
</comment>
<comment type="subcellular location">
    <subcellularLocation>
        <location>Plastid</location>
        <location>Chloroplast</location>
    </subcellularLocation>
</comment>
<comment type="similarity">
    <text evidence="1">Belongs to the intron maturase 2 family. MatK subfamily.</text>
</comment>
<proteinExistence type="inferred from homology"/>
<feature type="chain" id="PRO_0000143265" description="Maturase K">
    <location>
        <begin position="1"/>
        <end position="506"/>
    </location>
</feature>
<organism>
    <name type="scientific">Atractylodes lancea</name>
    <name type="common">Atractylodes japonica</name>
    <dbReference type="NCBI Taxonomy" id="41486"/>
    <lineage>
        <taxon>Eukaryota</taxon>
        <taxon>Viridiplantae</taxon>
        <taxon>Streptophyta</taxon>
        <taxon>Embryophyta</taxon>
        <taxon>Tracheophyta</taxon>
        <taxon>Spermatophyta</taxon>
        <taxon>Magnoliopsida</taxon>
        <taxon>eudicotyledons</taxon>
        <taxon>Gunneridae</taxon>
        <taxon>Pentapetalae</taxon>
        <taxon>asterids</taxon>
        <taxon>campanulids</taxon>
        <taxon>Asterales</taxon>
        <taxon>Asteraceae</taxon>
        <taxon>Carduoideae</taxon>
        <taxon>Cardueae</taxon>
        <taxon>Carlininae</taxon>
        <taxon>Atractylodes</taxon>
    </lineage>
</organism>